<accession>B1LYI4</accession>
<gene>
    <name evidence="1" type="primary">rpsF</name>
    <name type="ordered locus">Mrad2831_5421</name>
</gene>
<dbReference type="EMBL" id="CP001001">
    <property type="protein sequence ID" value="ACB27368.1"/>
    <property type="molecule type" value="Genomic_DNA"/>
</dbReference>
<dbReference type="RefSeq" id="WP_012322311.1">
    <property type="nucleotide sequence ID" value="NC_010505.1"/>
</dbReference>
<dbReference type="SMR" id="B1LYI4"/>
<dbReference type="STRING" id="426355.Mrad2831_5421"/>
<dbReference type="GeneID" id="6141494"/>
<dbReference type="KEGG" id="mrd:Mrad2831_5421"/>
<dbReference type="eggNOG" id="COG0360">
    <property type="taxonomic scope" value="Bacteria"/>
</dbReference>
<dbReference type="HOGENOM" id="CLU_113441_2_0_5"/>
<dbReference type="OrthoDB" id="9812702at2"/>
<dbReference type="Proteomes" id="UP000006589">
    <property type="component" value="Chromosome"/>
</dbReference>
<dbReference type="GO" id="GO:0022627">
    <property type="term" value="C:cytosolic small ribosomal subunit"/>
    <property type="evidence" value="ECO:0007669"/>
    <property type="project" value="TreeGrafter"/>
</dbReference>
<dbReference type="GO" id="GO:0070181">
    <property type="term" value="F:small ribosomal subunit rRNA binding"/>
    <property type="evidence" value="ECO:0007669"/>
    <property type="project" value="TreeGrafter"/>
</dbReference>
<dbReference type="GO" id="GO:0003735">
    <property type="term" value="F:structural constituent of ribosome"/>
    <property type="evidence" value="ECO:0007669"/>
    <property type="project" value="InterPro"/>
</dbReference>
<dbReference type="GO" id="GO:0006412">
    <property type="term" value="P:translation"/>
    <property type="evidence" value="ECO:0007669"/>
    <property type="project" value="UniProtKB-UniRule"/>
</dbReference>
<dbReference type="CDD" id="cd00473">
    <property type="entry name" value="bS6"/>
    <property type="match status" value="1"/>
</dbReference>
<dbReference type="Gene3D" id="3.30.70.60">
    <property type="match status" value="1"/>
</dbReference>
<dbReference type="HAMAP" id="MF_00360">
    <property type="entry name" value="Ribosomal_bS6"/>
    <property type="match status" value="1"/>
</dbReference>
<dbReference type="InterPro" id="IPR000529">
    <property type="entry name" value="Ribosomal_bS6"/>
</dbReference>
<dbReference type="InterPro" id="IPR035980">
    <property type="entry name" value="Ribosomal_bS6_sf"/>
</dbReference>
<dbReference type="InterPro" id="IPR020814">
    <property type="entry name" value="Ribosomal_S6_plastid/chlpt"/>
</dbReference>
<dbReference type="InterPro" id="IPR014717">
    <property type="entry name" value="Transl_elong_EF1B/ribsomal_bS6"/>
</dbReference>
<dbReference type="NCBIfam" id="TIGR00166">
    <property type="entry name" value="S6"/>
    <property type="match status" value="1"/>
</dbReference>
<dbReference type="PANTHER" id="PTHR21011">
    <property type="entry name" value="MITOCHONDRIAL 28S RIBOSOMAL PROTEIN S6"/>
    <property type="match status" value="1"/>
</dbReference>
<dbReference type="PANTHER" id="PTHR21011:SF1">
    <property type="entry name" value="SMALL RIBOSOMAL SUBUNIT PROTEIN BS6M"/>
    <property type="match status" value="1"/>
</dbReference>
<dbReference type="Pfam" id="PF01250">
    <property type="entry name" value="Ribosomal_S6"/>
    <property type="match status" value="1"/>
</dbReference>
<dbReference type="SUPFAM" id="SSF54995">
    <property type="entry name" value="Ribosomal protein S6"/>
    <property type="match status" value="1"/>
</dbReference>
<organism>
    <name type="scientific">Methylobacterium radiotolerans (strain ATCC 27329 / DSM 1819 / JCM 2831 / NBRC 15690 / NCIMB 10815 / 0-1)</name>
    <dbReference type="NCBI Taxonomy" id="426355"/>
    <lineage>
        <taxon>Bacteria</taxon>
        <taxon>Pseudomonadati</taxon>
        <taxon>Pseudomonadota</taxon>
        <taxon>Alphaproteobacteria</taxon>
        <taxon>Hyphomicrobiales</taxon>
        <taxon>Methylobacteriaceae</taxon>
        <taxon>Methylobacterium</taxon>
    </lineage>
</organism>
<reference key="1">
    <citation type="submission" date="2008-03" db="EMBL/GenBank/DDBJ databases">
        <title>Complete sequence of chromosome of Methylobacterium radiotolerans JCM 2831.</title>
        <authorList>
            <consortium name="US DOE Joint Genome Institute"/>
            <person name="Copeland A."/>
            <person name="Lucas S."/>
            <person name="Lapidus A."/>
            <person name="Glavina del Rio T."/>
            <person name="Dalin E."/>
            <person name="Tice H."/>
            <person name="Bruce D."/>
            <person name="Goodwin L."/>
            <person name="Pitluck S."/>
            <person name="Kiss H."/>
            <person name="Brettin T."/>
            <person name="Detter J.C."/>
            <person name="Han C."/>
            <person name="Kuske C.R."/>
            <person name="Schmutz J."/>
            <person name="Larimer F."/>
            <person name="Land M."/>
            <person name="Hauser L."/>
            <person name="Kyrpides N."/>
            <person name="Mikhailova N."/>
            <person name="Marx C.J."/>
            <person name="Richardson P."/>
        </authorList>
    </citation>
    <scope>NUCLEOTIDE SEQUENCE [LARGE SCALE GENOMIC DNA]</scope>
    <source>
        <strain>ATCC 27329 / DSM 1819 / JCM 2831 / NBRC 15690 / NCIMB 10815 / 0-1</strain>
    </source>
</reference>
<protein>
    <recommendedName>
        <fullName evidence="1">Small ribosomal subunit protein bS6</fullName>
    </recommendedName>
    <alternativeName>
        <fullName evidence="3">30S ribosomal protein S6</fullName>
    </alternativeName>
</protein>
<sequence>MPLYEHVLLARQDVTSQQVETMIDTYKGVIEQNGGRLEKIEMWGVKSLAYRIKKNRKAHFALLNIDAPPAAIAEMERQMQISEDVLRFMTIRVEELDSEPSAMMQKRDRDDRKDRERGRRRDDEGFGGGGGFGGDRGDRGDRGDRGERSFGGEG</sequence>
<comment type="function">
    <text evidence="1">Binds together with bS18 to 16S ribosomal RNA.</text>
</comment>
<comment type="similarity">
    <text evidence="1">Belongs to the bacterial ribosomal protein bS6 family.</text>
</comment>
<evidence type="ECO:0000255" key="1">
    <source>
        <dbReference type="HAMAP-Rule" id="MF_00360"/>
    </source>
</evidence>
<evidence type="ECO:0000256" key="2">
    <source>
        <dbReference type="SAM" id="MobiDB-lite"/>
    </source>
</evidence>
<evidence type="ECO:0000305" key="3"/>
<proteinExistence type="inferred from homology"/>
<keyword id="KW-0687">Ribonucleoprotein</keyword>
<keyword id="KW-0689">Ribosomal protein</keyword>
<keyword id="KW-0694">RNA-binding</keyword>
<keyword id="KW-0699">rRNA-binding</keyword>
<name>RS6_METRJ</name>
<feature type="chain" id="PRO_1000120773" description="Small ribosomal subunit protein bS6">
    <location>
        <begin position="1"/>
        <end position="154"/>
    </location>
</feature>
<feature type="region of interest" description="Disordered" evidence="2">
    <location>
        <begin position="97"/>
        <end position="154"/>
    </location>
</feature>
<feature type="compositionally biased region" description="Basic and acidic residues" evidence="2">
    <location>
        <begin position="105"/>
        <end position="124"/>
    </location>
</feature>
<feature type="compositionally biased region" description="Basic and acidic residues" evidence="2">
    <location>
        <begin position="135"/>
        <end position="154"/>
    </location>
</feature>